<keyword id="KW-1003">Cell membrane</keyword>
<keyword id="KW-0966">Cell projection</keyword>
<keyword id="KW-0175">Coiled coil</keyword>
<keyword id="KW-0963">Cytoplasm</keyword>
<keyword id="KW-0968">Cytoplasmic vesicle</keyword>
<keyword id="KW-0254">Endocytosis</keyword>
<keyword id="KW-0446">Lipid-binding</keyword>
<keyword id="KW-0472">Membrane</keyword>
<keyword id="KW-0597">Phosphoprotein</keyword>
<keyword id="KW-1185">Reference proteome</keyword>
<keyword id="KW-0728">SH3 domain</keyword>
<keyword id="KW-0770">Synapse</keyword>
<keyword id="KW-0771">Synaptosome</keyword>
<evidence type="ECO:0000250" key="1"/>
<evidence type="ECO:0000250" key="2">
    <source>
        <dbReference type="UniProtKB" id="Q61644"/>
    </source>
</evidence>
<evidence type="ECO:0000250" key="3">
    <source>
        <dbReference type="UniProtKB" id="Q9Z0W5"/>
    </source>
</evidence>
<evidence type="ECO:0000255" key="4">
    <source>
        <dbReference type="PROSITE-ProRule" id="PRU00192"/>
    </source>
</evidence>
<evidence type="ECO:0000255" key="5">
    <source>
        <dbReference type="PROSITE-ProRule" id="PRU01077"/>
    </source>
</evidence>
<evidence type="ECO:0000256" key="6">
    <source>
        <dbReference type="SAM" id="MobiDB-lite"/>
    </source>
</evidence>
<evidence type="ECO:0000305" key="7"/>
<proteinExistence type="evidence at transcript level"/>
<sequence length="444" mass="50922">MSSSYDEASLAPEETTDSFWEVGNYKRTVKRIDDGHRLCNDLMNCVQERAKIEKAYGQQLTDWAKRWRQLIEKGPQYGSLERAWGAIMTEADKVSELHQEVKNNLLNEDLEKVKNWQKDAYHKQIMGGFKETKEAEDGFRKAQKPWAKKMKELEAAKKAYHLACKEEKLAMTREMNSKSEQSVTPEQQKKLQDKVDKCKQDVQKTQEKYEKVLEDVGKTTPQYMENMEQVFEQCQQFEEKRLVFLKEVLLDIKRHLNLAENSSYIHVYRELEQAIRGADAQEDLRWFRSTSGPGMPMNWPQFEEWNPDLPHTTTKKEKQPKKAEGVALTNATGAVESTSQAGDRGSVSSYDRGQPYATEWSDDESGNPFGGSEANGGANPFEDDSKGVRVRALYDYDGQEQDELSFKAGDELTKLGEEDEQGWCRGRLDSGQLGLYPANYVEAI</sequence>
<dbReference type="EMBL" id="CR859322">
    <property type="protein sequence ID" value="CAH91500.1"/>
    <property type="molecule type" value="mRNA"/>
</dbReference>
<dbReference type="EMBL" id="CR861449">
    <property type="protein sequence ID" value="CAH93505.1"/>
    <property type="molecule type" value="mRNA"/>
</dbReference>
<dbReference type="RefSeq" id="NP_001125882.1">
    <property type="nucleotide sequence ID" value="NM_001132410.1"/>
</dbReference>
<dbReference type="RefSeq" id="XP_009240032.1">
    <property type="nucleotide sequence ID" value="XM_009241757.1"/>
</dbReference>
<dbReference type="SMR" id="Q5R411"/>
<dbReference type="FunCoup" id="Q5R411">
    <property type="interactions" value="884"/>
</dbReference>
<dbReference type="STRING" id="9601.ENSPPYP00000018470"/>
<dbReference type="Ensembl" id="ENSPPYT00000019207.2">
    <property type="protein sequence ID" value="ENSPPYP00000018470.1"/>
    <property type="gene ID" value="ENSPPYG00000016517.2"/>
</dbReference>
<dbReference type="GeneID" id="100172814"/>
<dbReference type="KEGG" id="pon:100172814"/>
<dbReference type="CTD" id="29993"/>
<dbReference type="eggNOG" id="KOG2856">
    <property type="taxonomic scope" value="Eukaryota"/>
</dbReference>
<dbReference type="GeneTree" id="ENSGT00950000182973"/>
<dbReference type="HOGENOM" id="CLU_030752_0_0_1"/>
<dbReference type="InParanoid" id="Q5R411"/>
<dbReference type="OMA" id="ACQMKEL"/>
<dbReference type="OrthoDB" id="10255128at2759"/>
<dbReference type="TreeFam" id="TF313677"/>
<dbReference type="Proteomes" id="UP000001595">
    <property type="component" value="Chromosome 6"/>
</dbReference>
<dbReference type="GO" id="GO:0043679">
    <property type="term" value="C:axon terminus"/>
    <property type="evidence" value="ECO:0000250"/>
    <property type="project" value="UniProtKB"/>
</dbReference>
<dbReference type="GO" id="GO:0030137">
    <property type="term" value="C:COPI-coated vesicle"/>
    <property type="evidence" value="ECO:0007669"/>
    <property type="project" value="Ensembl"/>
</dbReference>
<dbReference type="GO" id="GO:0005737">
    <property type="term" value="C:cytoplasm"/>
    <property type="evidence" value="ECO:0000250"/>
    <property type="project" value="UniProtKB"/>
</dbReference>
<dbReference type="GO" id="GO:0030659">
    <property type="term" value="C:cytoplasmic vesicle membrane"/>
    <property type="evidence" value="ECO:0007669"/>
    <property type="project" value="UniProtKB-SubCell"/>
</dbReference>
<dbReference type="GO" id="GO:0005829">
    <property type="term" value="C:cytosol"/>
    <property type="evidence" value="ECO:0007669"/>
    <property type="project" value="UniProtKB-SubCell"/>
</dbReference>
<dbReference type="GO" id="GO:0005768">
    <property type="term" value="C:endosome"/>
    <property type="evidence" value="ECO:0007669"/>
    <property type="project" value="TreeGrafter"/>
</dbReference>
<dbReference type="GO" id="GO:0098684">
    <property type="term" value="C:photoreceptor ribbon synapse"/>
    <property type="evidence" value="ECO:0007669"/>
    <property type="project" value="Ensembl"/>
</dbReference>
<dbReference type="GO" id="GO:0098833">
    <property type="term" value="C:presynaptic endocytic zone"/>
    <property type="evidence" value="ECO:0007669"/>
    <property type="project" value="Ensembl"/>
</dbReference>
<dbReference type="GO" id="GO:0032587">
    <property type="term" value="C:ruffle membrane"/>
    <property type="evidence" value="ECO:0000250"/>
    <property type="project" value="UniProtKB"/>
</dbReference>
<dbReference type="GO" id="GO:0008092">
    <property type="term" value="F:cytoskeletal protein binding"/>
    <property type="evidence" value="ECO:0007669"/>
    <property type="project" value="Ensembl"/>
</dbReference>
<dbReference type="GO" id="GO:0042802">
    <property type="term" value="F:identical protein binding"/>
    <property type="evidence" value="ECO:0007669"/>
    <property type="project" value="Ensembl"/>
</dbReference>
<dbReference type="GO" id="GO:0005543">
    <property type="term" value="F:phospholipid binding"/>
    <property type="evidence" value="ECO:0000250"/>
    <property type="project" value="UniProtKB"/>
</dbReference>
<dbReference type="GO" id="GO:0007015">
    <property type="term" value="P:actin filament organization"/>
    <property type="evidence" value="ECO:0007669"/>
    <property type="project" value="InterPro"/>
</dbReference>
<dbReference type="GO" id="GO:0045806">
    <property type="term" value="P:negative regulation of endocytosis"/>
    <property type="evidence" value="ECO:0007669"/>
    <property type="project" value="Ensembl"/>
</dbReference>
<dbReference type="GO" id="GO:0048812">
    <property type="term" value="P:neuron projection morphogenesis"/>
    <property type="evidence" value="ECO:0000250"/>
    <property type="project" value="UniProtKB"/>
</dbReference>
<dbReference type="GO" id="GO:0097320">
    <property type="term" value="P:plasma membrane tubulation"/>
    <property type="evidence" value="ECO:0000250"/>
    <property type="project" value="UniProtKB"/>
</dbReference>
<dbReference type="GO" id="GO:1900006">
    <property type="term" value="P:positive regulation of dendrite development"/>
    <property type="evidence" value="ECO:0007669"/>
    <property type="project" value="TreeGrafter"/>
</dbReference>
<dbReference type="GO" id="GO:0072657">
    <property type="term" value="P:protein localization to membrane"/>
    <property type="evidence" value="ECO:0000250"/>
    <property type="project" value="UniProtKB"/>
</dbReference>
<dbReference type="GO" id="GO:0048488">
    <property type="term" value="P:synaptic vesicle endocytosis"/>
    <property type="evidence" value="ECO:0000250"/>
    <property type="project" value="UniProtKB"/>
</dbReference>
<dbReference type="CDD" id="cd07680">
    <property type="entry name" value="F-BAR_PACSIN1"/>
    <property type="match status" value="1"/>
</dbReference>
<dbReference type="CDD" id="cd11998">
    <property type="entry name" value="SH3_PACSIN1-2"/>
    <property type="match status" value="1"/>
</dbReference>
<dbReference type="FunFam" id="2.30.30.40:FF:000014">
    <property type="entry name" value="Kinase C and casein kinase substrate in neurons protein"/>
    <property type="match status" value="1"/>
</dbReference>
<dbReference type="FunFam" id="1.20.1270.60:FF:000205">
    <property type="entry name" value="Protein kinase C and casein kinase substrate in neurons protein 1"/>
    <property type="match status" value="1"/>
</dbReference>
<dbReference type="Gene3D" id="1.20.1270.60">
    <property type="entry name" value="Arfaptin homology (AH) domain/BAR domain"/>
    <property type="match status" value="1"/>
</dbReference>
<dbReference type="Gene3D" id="2.30.30.40">
    <property type="entry name" value="SH3 Domains"/>
    <property type="match status" value="1"/>
</dbReference>
<dbReference type="InterPro" id="IPR027267">
    <property type="entry name" value="AH/BAR_dom_sf"/>
</dbReference>
<dbReference type="InterPro" id="IPR031160">
    <property type="entry name" value="F_BAR"/>
</dbReference>
<dbReference type="InterPro" id="IPR001060">
    <property type="entry name" value="FCH_dom"/>
</dbReference>
<dbReference type="InterPro" id="IPR035743">
    <property type="entry name" value="PACSIN1/PACSIN2_SH3"/>
</dbReference>
<dbReference type="InterPro" id="IPR037454">
    <property type="entry name" value="PACSIN1_F-BAR"/>
</dbReference>
<dbReference type="InterPro" id="IPR036028">
    <property type="entry name" value="SH3-like_dom_sf"/>
</dbReference>
<dbReference type="InterPro" id="IPR001452">
    <property type="entry name" value="SH3_domain"/>
</dbReference>
<dbReference type="PANTHER" id="PTHR23065">
    <property type="entry name" value="PROLINE-SERINE-THREONINE PHOSPHATASE INTERACTING PROTEIN 1"/>
    <property type="match status" value="1"/>
</dbReference>
<dbReference type="PANTHER" id="PTHR23065:SF16">
    <property type="entry name" value="PROTEIN KINASE C AND CASEIN KINASE SUBSTRATE IN NEURONS PROTEIN 1"/>
    <property type="match status" value="1"/>
</dbReference>
<dbReference type="Pfam" id="PF00611">
    <property type="entry name" value="FCH"/>
    <property type="match status" value="1"/>
</dbReference>
<dbReference type="Pfam" id="PF14604">
    <property type="entry name" value="SH3_9"/>
    <property type="match status" value="1"/>
</dbReference>
<dbReference type="PRINTS" id="PR00452">
    <property type="entry name" value="SH3DOMAIN"/>
</dbReference>
<dbReference type="SMART" id="SM00055">
    <property type="entry name" value="FCH"/>
    <property type="match status" value="1"/>
</dbReference>
<dbReference type="SMART" id="SM00326">
    <property type="entry name" value="SH3"/>
    <property type="match status" value="1"/>
</dbReference>
<dbReference type="SUPFAM" id="SSF103657">
    <property type="entry name" value="BAR/IMD domain-like"/>
    <property type="match status" value="1"/>
</dbReference>
<dbReference type="SUPFAM" id="SSF50044">
    <property type="entry name" value="SH3-domain"/>
    <property type="match status" value="1"/>
</dbReference>
<dbReference type="PROSITE" id="PS51741">
    <property type="entry name" value="F_BAR"/>
    <property type="match status" value="1"/>
</dbReference>
<dbReference type="PROSITE" id="PS50002">
    <property type="entry name" value="SH3"/>
    <property type="match status" value="1"/>
</dbReference>
<comment type="function">
    <text evidence="1">Binds to membranes via its F-BAR domain and mediates membrane tubulation. Plays a role in the reorganization of the microtubule cytoskeleton via its interaction with MAPT; this decreases microtubule stability and inhibits MAPT-induced microtubule polymerization. Plays a role in cellular transport processes by recruiting DNM1, DNM2 and DNM3 to membranes. Plays a role in the reorganization of the actin cytoskeleton and in neuron morphogenesis via its interaction with COBL and WASL, and by recruiting COBL to the cell cortex. Plays a role in the regulation of neurite formation, neurite branching and the regulation of neurite length. Required for normal synaptic vesicle endocytosis; this process retrieves previously released neurotransmitters to accommodate multiple cycles of neurotransmission. Required for normal excitatory and inhibitory synaptic transmission (By similarity).</text>
</comment>
<comment type="subunit">
    <text evidence="1">Homodimer. May form heterooligomers with other PACSINs. Interacts with both COBL and DBNL. Identified in a complex composed of COBL, PACSIN1 and WASL. Interacts (via SH3 domain) with SYNJ1 and WASL. Interacts (via SH3 domain) with DNM1; the interaction is reduced by DNM1 phosphorylation. Interacts with DNM2 and DNM3. Interacts with MAPT. Interacts with EHD1 and EHD3. Interacts with TRPV4 (By similarity).</text>
</comment>
<comment type="subcellular location">
    <subcellularLocation>
        <location evidence="1">Cytoplasm</location>
    </subcellularLocation>
    <subcellularLocation>
        <location evidence="1">Cell projection</location>
    </subcellularLocation>
    <subcellularLocation>
        <location evidence="1">Synapse</location>
        <location evidence="1">Synaptosome</location>
    </subcellularLocation>
    <subcellularLocation>
        <location evidence="1">Cell projection</location>
        <location evidence="1">Ruffle membrane</location>
    </subcellularLocation>
    <subcellularLocation>
        <location evidence="1">Membrane</location>
        <topology evidence="1">Peripheral membrane protein</topology>
    </subcellularLocation>
    <subcellularLocation>
        <location evidence="1">Cytoplasmic vesicle membrane</location>
        <topology evidence="1">Peripheral membrane protein</topology>
    </subcellularLocation>
    <subcellularLocation>
        <location evidence="1">Synapse</location>
    </subcellularLocation>
    <subcellularLocation>
        <location>Cytoplasm</location>
        <location>Cytosol</location>
    </subcellularLocation>
    <subcellularLocation>
        <location evidence="1">Cell membrane</location>
        <topology evidence="1">Peripheral membrane protein</topology>
        <orientation evidence="1">Cytoplasmic side</orientation>
    </subcellularLocation>
    <text evidence="1">In primary neuronal cultures, present at a high level in presynaptic nerve terminals and in the cell body. Colocalizes with DNM1 at vesicular structures in the cell body and neurites. Colocalizes with MAPT in axons (By similarity).</text>
</comment>
<comment type="PTM">
    <text evidence="7">Phosphorylated by casein kinase 2 (CK2) and protein kinase C (PKC).</text>
</comment>
<comment type="similarity">
    <text evidence="7">Belongs to the PACSIN family.</text>
</comment>
<feature type="chain" id="PRO_0000351650" description="Protein kinase C and casein kinase substrate in neurons protein 1">
    <location>
        <begin position="1"/>
        <end position="444"/>
    </location>
</feature>
<feature type="domain" description="F-BAR" evidence="5">
    <location>
        <begin position="13"/>
        <end position="283"/>
    </location>
</feature>
<feature type="domain" description="SH3" evidence="4">
    <location>
        <begin position="385"/>
        <end position="444"/>
    </location>
</feature>
<feature type="region of interest" description="Disordered" evidence="6">
    <location>
        <begin position="173"/>
        <end position="194"/>
    </location>
</feature>
<feature type="region of interest" description="Disordered" evidence="6">
    <location>
        <begin position="309"/>
        <end position="386"/>
    </location>
</feature>
<feature type="coiled-coil region" evidence="1">
    <location>
        <begin position="26"/>
        <end position="275"/>
    </location>
</feature>
<feature type="compositionally biased region" description="Basic and acidic residues" evidence="6">
    <location>
        <begin position="314"/>
        <end position="324"/>
    </location>
</feature>
<feature type="compositionally biased region" description="Polar residues" evidence="6">
    <location>
        <begin position="329"/>
        <end position="351"/>
    </location>
</feature>
<feature type="modified residue" description="Phosphoserine" evidence="3">
    <location>
        <position position="2"/>
    </location>
</feature>
<feature type="modified residue" description="Phosphoserine" evidence="3">
    <location>
        <position position="79"/>
    </location>
</feature>
<feature type="modified residue" description="Phosphothreonine" evidence="3">
    <location>
        <position position="184"/>
    </location>
</feature>
<feature type="modified residue" description="Phosphoserine" evidence="2">
    <location>
        <position position="346"/>
    </location>
</feature>
<feature type="modified residue" description="Phosphoserine" evidence="2">
    <location>
        <position position="348"/>
    </location>
</feature>
<feature type="modified residue" description="Phosphoserine" evidence="3">
    <location>
        <position position="349"/>
    </location>
</feature>
<feature type="modified residue" description="Phosphoserine" evidence="2">
    <location>
        <position position="361"/>
    </location>
</feature>
<feature type="modified residue" description="Phosphoserine" evidence="3">
    <location>
        <position position="365"/>
    </location>
</feature>
<feature type="modified residue" description="Phosphotyrosine" evidence="2">
    <location>
        <position position="394"/>
    </location>
</feature>
<feature type="modified residue" description="Phosphoserine" evidence="2">
    <location>
        <position position="405"/>
    </location>
</feature>
<feature type="modified residue" description="Phosphoserine" evidence="2">
    <location>
        <position position="430"/>
    </location>
</feature>
<feature type="sequence conflict" description="In Ref. 1; CAH91500." evidence="7" ref="1">
    <original>V</original>
    <variation>A</variation>
    <location>
        <position position="113"/>
    </location>
</feature>
<feature type="sequence conflict" description="In Ref. 1; CAH91500." evidence="7" ref="1">
    <original>K</original>
    <variation>R</variation>
    <location>
        <position position="141"/>
    </location>
</feature>
<gene>
    <name type="primary">Pacsin1</name>
</gene>
<name>PACN1_PONAB</name>
<organism>
    <name type="scientific">Pongo abelii</name>
    <name type="common">Sumatran orangutan</name>
    <name type="synonym">Pongo pygmaeus abelii</name>
    <dbReference type="NCBI Taxonomy" id="9601"/>
    <lineage>
        <taxon>Eukaryota</taxon>
        <taxon>Metazoa</taxon>
        <taxon>Chordata</taxon>
        <taxon>Craniata</taxon>
        <taxon>Vertebrata</taxon>
        <taxon>Euteleostomi</taxon>
        <taxon>Mammalia</taxon>
        <taxon>Eutheria</taxon>
        <taxon>Euarchontoglires</taxon>
        <taxon>Primates</taxon>
        <taxon>Haplorrhini</taxon>
        <taxon>Catarrhini</taxon>
        <taxon>Hominidae</taxon>
        <taxon>Pongo</taxon>
    </lineage>
</organism>
<protein>
    <recommendedName>
        <fullName>Protein kinase C and casein kinase substrate in neurons protein 1</fullName>
    </recommendedName>
</protein>
<reference key="1">
    <citation type="submission" date="2004-11" db="EMBL/GenBank/DDBJ databases">
        <authorList>
            <consortium name="The German cDNA consortium"/>
        </authorList>
    </citation>
    <scope>NUCLEOTIDE SEQUENCE [LARGE SCALE MRNA]</scope>
    <source>
        <tissue>Brain cortex</tissue>
    </source>
</reference>
<accession>Q5R411</accession>
<accession>Q5R9R0</accession>